<proteinExistence type="inferred from homology"/>
<comment type="function">
    <text evidence="1">Involved in bleomycin tolerance with links to DNA repair and/or proteasome function.</text>
</comment>
<comment type="subcellular location">
    <subcellularLocation>
        <location evidence="3">Cytoplasm</location>
    </subcellularLocation>
    <subcellularLocation>
        <location evidence="3">Nucleus</location>
    </subcellularLocation>
</comment>
<comment type="similarity">
    <text evidence="4">Belongs to the CUB1 family.</text>
</comment>
<sequence>MMSYEPAEPVPVEEQPILEKLIGIRQRLAVLKRDRTRFIEKNEVFHLKDELVEQMNLLDSRRSTNSTRTIVDSQLEDCLHLLSLFYLAIGRNNDLPAFFVQLGTVRRLLEYNLEGACYTQNDLKPLKERLERIRAAIVEGSKKEDASPVVVKYLNNKLAVCDRNYSEAQHNISKISPELIGIQTRLVSIHRQIDGFAVRPTSDPGFIDRTMEQLKEIEEMKDSNGMFCDADHVPLQGQELCNGILEECFSFLEDAKTKEGLSDEMKSSPKLQQIYHRLDELLNKLKHLTLTHRWTLRETDLYVYRASLAEIDSMRIDGQFLDEQGNAPAGQRILLYLLRRCYAYIYQLLSSSEPVSEELMAVHNQLRTVKRCLLEVQRSGGICSERDLYPYQMKLASLENLRVNGKFLASDHSVPEGQELVNSLLTQCHQLIEELRDEKHQHDIEEREGSENTDGNL</sequence>
<feature type="chain" id="PRO_0000352784" description="CUB1 family protein C30C2.08">
    <location>
        <begin position="1"/>
        <end position="457"/>
    </location>
</feature>
<feature type="coiled-coil region" evidence="2">
    <location>
        <begin position="119"/>
        <end position="174"/>
    </location>
</feature>
<feature type="coiled-coil region" evidence="2">
    <location>
        <begin position="418"/>
        <end position="448"/>
    </location>
</feature>
<reference key="1">
    <citation type="journal article" date="2002" name="Nature">
        <title>The genome sequence of Schizosaccharomyces pombe.</title>
        <authorList>
            <person name="Wood V."/>
            <person name="Gwilliam R."/>
            <person name="Rajandream M.A."/>
            <person name="Lyne M.H."/>
            <person name="Lyne R."/>
            <person name="Stewart A."/>
            <person name="Sgouros J.G."/>
            <person name="Peat N."/>
            <person name="Hayles J."/>
            <person name="Baker S.G."/>
            <person name="Basham D."/>
            <person name="Bowman S."/>
            <person name="Brooks K."/>
            <person name="Brown D."/>
            <person name="Brown S."/>
            <person name="Chillingworth T."/>
            <person name="Churcher C.M."/>
            <person name="Collins M."/>
            <person name="Connor R."/>
            <person name="Cronin A."/>
            <person name="Davis P."/>
            <person name="Feltwell T."/>
            <person name="Fraser A."/>
            <person name="Gentles S."/>
            <person name="Goble A."/>
            <person name="Hamlin N."/>
            <person name="Harris D.E."/>
            <person name="Hidalgo J."/>
            <person name="Hodgson G."/>
            <person name="Holroyd S."/>
            <person name="Hornsby T."/>
            <person name="Howarth S."/>
            <person name="Huckle E.J."/>
            <person name="Hunt S."/>
            <person name="Jagels K."/>
            <person name="James K.D."/>
            <person name="Jones L."/>
            <person name="Jones M."/>
            <person name="Leather S."/>
            <person name="McDonald S."/>
            <person name="McLean J."/>
            <person name="Mooney P."/>
            <person name="Moule S."/>
            <person name="Mungall K.L."/>
            <person name="Murphy L.D."/>
            <person name="Niblett D."/>
            <person name="Odell C."/>
            <person name="Oliver K."/>
            <person name="O'Neil S."/>
            <person name="Pearson D."/>
            <person name="Quail M.A."/>
            <person name="Rabbinowitsch E."/>
            <person name="Rutherford K.M."/>
            <person name="Rutter S."/>
            <person name="Saunders D."/>
            <person name="Seeger K."/>
            <person name="Sharp S."/>
            <person name="Skelton J."/>
            <person name="Simmonds M.N."/>
            <person name="Squares R."/>
            <person name="Squares S."/>
            <person name="Stevens K."/>
            <person name="Taylor K."/>
            <person name="Taylor R.G."/>
            <person name="Tivey A."/>
            <person name="Walsh S.V."/>
            <person name="Warren T."/>
            <person name="Whitehead S."/>
            <person name="Woodward J.R."/>
            <person name="Volckaert G."/>
            <person name="Aert R."/>
            <person name="Robben J."/>
            <person name="Grymonprez B."/>
            <person name="Weltjens I."/>
            <person name="Vanstreels E."/>
            <person name="Rieger M."/>
            <person name="Schaefer M."/>
            <person name="Mueller-Auer S."/>
            <person name="Gabel C."/>
            <person name="Fuchs M."/>
            <person name="Duesterhoeft A."/>
            <person name="Fritzc C."/>
            <person name="Holzer E."/>
            <person name="Moestl D."/>
            <person name="Hilbert H."/>
            <person name="Borzym K."/>
            <person name="Langer I."/>
            <person name="Beck A."/>
            <person name="Lehrach H."/>
            <person name="Reinhardt R."/>
            <person name="Pohl T.M."/>
            <person name="Eger P."/>
            <person name="Zimmermann W."/>
            <person name="Wedler H."/>
            <person name="Wambutt R."/>
            <person name="Purnelle B."/>
            <person name="Goffeau A."/>
            <person name="Cadieu E."/>
            <person name="Dreano S."/>
            <person name="Gloux S."/>
            <person name="Lelaure V."/>
            <person name="Mottier S."/>
            <person name="Galibert F."/>
            <person name="Aves S.J."/>
            <person name="Xiang Z."/>
            <person name="Hunt C."/>
            <person name="Moore K."/>
            <person name="Hurst S.M."/>
            <person name="Lucas M."/>
            <person name="Rochet M."/>
            <person name="Gaillardin C."/>
            <person name="Tallada V.A."/>
            <person name="Garzon A."/>
            <person name="Thode G."/>
            <person name="Daga R.R."/>
            <person name="Cruzado L."/>
            <person name="Jimenez J."/>
            <person name="Sanchez M."/>
            <person name="del Rey F."/>
            <person name="Benito J."/>
            <person name="Dominguez A."/>
            <person name="Revuelta J.L."/>
            <person name="Moreno S."/>
            <person name="Armstrong J."/>
            <person name="Forsburg S.L."/>
            <person name="Cerutti L."/>
            <person name="Lowe T."/>
            <person name="McCombie W.R."/>
            <person name="Paulsen I."/>
            <person name="Potashkin J."/>
            <person name="Shpakovski G.V."/>
            <person name="Ussery D."/>
            <person name="Barrell B.G."/>
            <person name="Nurse P."/>
        </authorList>
    </citation>
    <scope>NUCLEOTIDE SEQUENCE [LARGE SCALE GENOMIC DNA]</scope>
    <source>
        <strain>972 / ATCC 24843</strain>
    </source>
</reference>
<reference evidence="4" key="2">
    <citation type="journal article" date="2006" name="Nat. Biotechnol.">
        <title>ORFeome cloning and global analysis of protein localization in the fission yeast Schizosaccharomyces pombe.</title>
        <authorList>
            <person name="Matsuyama A."/>
            <person name="Arai R."/>
            <person name="Yashiroda Y."/>
            <person name="Shirai A."/>
            <person name="Kamata A."/>
            <person name="Sekido S."/>
            <person name="Kobayashi Y."/>
            <person name="Hashimoto A."/>
            <person name="Hamamoto M."/>
            <person name="Hiraoka Y."/>
            <person name="Horinouchi S."/>
            <person name="Yoshida M."/>
        </authorList>
    </citation>
    <scope>SUBCELLULAR LOCATION [LARGE SCALE ANALYSIS]</scope>
</reference>
<name>CUB1_SCHPO</name>
<evidence type="ECO:0000250" key="1">
    <source>
        <dbReference type="UniProtKB" id="Q08977"/>
    </source>
</evidence>
<evidence type="ECO:0000255" key="2"/>
<evidence type="ECO:0000269" key="3">
    <source>
    </source>
</evidence>
<evidence type="ECO:0000305" key="4"/>
<dbReference type="EMBL" id="CU329670">
    <property type="protein sequence ID" value="CAB90795.1"/>
    <property type="molecule type" value="Genomic_DNA"/>
</dbReference>
<dbReference type="RefSeq" id="NP_594660.1">
    <property type="nucleotide sequence ID" value="NM_001020089.2"/>
</dbReference>
<dbReference type="SMR" id="Q9P6K3"/>
<dbReference type="BioGRID" id="279494">
    <property type="interactions" value="5"/>
</dbReference>
<dbReference type="FunCoup" id="Q9P6K3">
    <property type="interactions" value="1"/>
</dbReference>
<dbReference type="STRING" id="284812.Q9P6K3"/>
<dbReference type="iPTMnet" id="Q9P6K3"/>
<dbReference type="PaxDb" id="4896-SPAC30C2.08.1"/>
<dbReference type="EnsemblFungi" id="SPAC30C2.08.1">
    <property type="protein sequence ID" value="SPAC30C2.08.1:pep"/>
    <property type="gene ID" value="SPAC30C2.08"/>
</dbReference>
<dbReference type="KEGG" id="spo:2543060"/>
<dbReference type="PomBase" id="SPAC30C2.08"/>
<dbReference type="VEuPathDB" id="FungiDB:SPAC30C2.08"/>
<dbReference type="eggNOG" id="ENOG502QPV0">
    <property type="taxonomic scope" value="Eukaryota"/>
</dbReference>
<dbReference type="HOGENOM" id="CLU_026648_1_0_1"/>
<dbReference type="InParanoid" id="Q9P6K3"/>
<dbReference type="OMA" id="KQDRTTY"/>
<dbReference type="PhylomeDB" id="Q9P6K3"/>
<dbReference type="PRO" id="PR:Q9P6K3"/>
<dbReference type="Proteomes" id="UP000002485">
    <property type="component" value="Chromosome I"/>
</dbReference>
<dbReference type="GO" id="GO:0005829">
    <property type="term" value="C:cytosol"/>
    <property type="evidence" value="ECO:0007005"/>
    <property type="project" value="PomBase"/>
</dbReference>
<dbReference type="GO" id="GO:0005634">
    <property type="term" value="C:nucleus"/>
    <property type="evidence" value="ECO:0007005"/>
    <property type="project" value="PomBase"/>
</dbReference>
<dbReference type="InterPro" id="IPR018810">
    <property type="entry name" value="UPF0662"/>
</dbReference>
<dbReference type="PANTHER" id="PTHR28086:SF1">
    <property type="entry name" value="CU(2+) SUPPRESSING AND BLEOMYCIN SENSITIVE PROTEIN 1"/>
    <property type="match status" value="1"/>
</dbReference>
<dbReference type="PANTHER" id="PTHR28086">
    <property type="entry name" value="UPF0662 PROTEIN YPL260W"/>
    <property type="match status" value="1"/>
</dbReference>
<dbReference type="Pfam" id="PF10303">
    <property type="entry name" value="DUF2408"/>
    <property type="match status" value="2"/>
</dbReference>
<keyword id="KW-0175">Coiled coil</keyword>
<keyword id="KW-0963">Cytoplasm</keyword>
<keyword id="KW-0539">Nucleus</keyword>
<keyword id="KW-1185">Reference proteome</keyword>
<gene>
    <name type="ORF">SPAC30C2.08</name>
</gene>
<protein>
    <recommendedName>
        <fullName evidence="4">CUB1 family protein C30C2.08</fullName>
    </recommendedName>
</protein>
<accession>Q9P6K3</accession>
<organism>
    <name type="scientific">Schizosaccharomyces pombe (strain 972 / ATCC 24843)</name>
    <name type="common">Fission yeast</name>
    <dbReference type="NCBI Taxonomy" id="284812"/>
    <lineage>
        <taxon>Eukaryota</taxon>
        <taxon>Fungi</taxon>
        <taxon>Dikarya</taxon>
        <taxon>Ascomycota</taxon>
        <taxon>Taphrinomycotina</taxon>
        <taxon>Schizosaccharomycetes</taxon>
        <taxon>Schizosaccharomycetales</taxon>
        <taxon>Schizosaccharomycetaceae</taxon>
        <taxon>Schizosaccharomyces</taxon>
    </lineage>
</organism>